<reference key="1">
    <citation type="journal article" date="2007" name="PLoS ONE">
        <title>The complete genome sequence and analysis of the Epsilonproteobacterium Arcobacter butzleri.</title>
        <authorList>
            <person name="Miller W.G."/>
            <person name="Parker C.T."/>
            <person name="Rubenfield M."/>
            <person name="Mendz G.L."/>
            <person name="Woesten M.M.S.M."/>
            <person name="Ussery D.W."/>
            <person name="Stolz J.F."/>
            <person name="Binnewies T.T."/>
            <person name="Hallin P.F."/>
            <person name="Wang G."/>
            <person name="Malek J.A."/>
            <person name="Rogosin A."/>
            <person name="Stanker L.H."/>
            <person name="Mandrell R.E."/>
        </authorList>
    </citation>
    <scope>NUCLEOTIDE SEQUENCE [LARGE SCALE GENOMIC DNA]</scope>
    <source>
        <strain>RM4018</strain>
    </source>
</reference>
<proteinExistence type="inferred from homology"/>
<sequence>MILHIPEVLSKEQLTECRNLLNKANWIDGKITAGNQAINAKNNFQLAESDPLTNYLRDIIKTALNSNPLFISAALPKHIISPFFNKYENGGNYGNHVDNSILFDMNEKKAFRTDISCSLFFTDPEEYEGGEMVIEDTFGTHEVKLPAGDLILYPSTSLHRVEPVTKGVRMVSFMWIQSMIRSAWKRSILFELDNTIQSLRVNYGEIEETLNLSIHYHKLIQEWSEL</sequence>
<gene>
    <name type="ordered locus">Abu_0724</name>
</gene>
<dbReference type="EC" id="1.14.11.-" evidence="1"/>
<dbReference type="EMBL" id="CP000361">
    <property type="protein sequence ID" value="ABV66989.1"/>
    <property type="molecule type" value="Genomic_DNA"/>
</dbReference>
<dbReference type="RefSeq" id="WP_012012489.1">
    <property type="nucleotide sequence ID" value="NC_009850.1"/>
</dbReference>
<dbReference type="SMR" id="A8ESR5"/>
<dbReference type="STRING" id="367737.Abu_0724"/>
<dbReference type="GeneID" id="24303813"/>
<dbReference type="KEGG" id="abu:Abu_0724"/>
<dbReference type="eggNOG" id="COG3128">
    <property type="taxonomic scope" value="Bacteria"/>
</dbReference>
<dbReference type="HOGENOM" id="CLU_106663_0_0_7"/>
<dbReference type="Proteomes" id="UP000001136">
    <property type="component" value="Chromosome"/>
</dbReference>
<dbReference type="GO" id="GO:0016706">
    <property type="term" value="F:2-oxoglutarate-dependent dioxygenase activity"/>
    <property type="evidence" value="ECO:0007669"/>
    <property type="project" value="InterPro"/>
</dbReference>
<dbReference type="GO" id="GO:0005506">
    <property type="term" value="F:iron ion binding"/>
    <property type="evidence" value="ECO:0007669"/>
    <property type="project" value="InterPro"/>
</dbReference>
<dbReference type="GO" id="GO:0031418">
    <property type="term" value="F:L-ascorbic acid binding"/>
    <property type="evidence" value="ECO:0007669"/>
    <property type="project" value="UniProtKB-KW"/>
</dbReference>
<dbReference type="GO" id="GO:0006974">
    <property type="term" value="P:DNA damage response"/>
    <property type="evidence" value="ECO:0007669"/>
    <property type="project" value="TreeGrafter"/>
</dbReference>
<dbReference type="GO" id="GO:0006879">
    <property type="term" value="P:intracellular iron ion homeostasis"/>
    <property type="evidence" value="ECO:0007669"/>
    <property type="project" value="TreeGrafter"/>
</dbReference>
<dbReference type="Gene3D" id="2.60.120.620">
    <property type="entry name" value="q2cbj1_9rhob like domain"/>
    <property type="match status" value="1"/>
</dbReference>
<dbReference type="Gene3D" id="4.10.860.20">
    <property type="entry name" value="Rabenosyn, Rab binding domain"/>
    <property type="match status" value="1"/>
</dbReference>
<dbReference type="HAMAP" id="MF_00657">
    <property type="entry name" value="Hydroxyl_YbiX"/>
    <property type="match status" value="1"/>
</dbReference>
<dbReference type="InterPro" id="IPR005123">
    <property type="entry name" value="Oxoglu/Fe-dep_dioxygenase_dom"/>
</dbReference>
<dbReference type="InterPro" id="IPR041097">
    <property type="entry name" value="PKHD_C"/>
</dbReference>
<dbReference type="InterPro" id="IPR023550">
    <property type="entry name" value="PKHD_hydroxylase"/>
</dbReference>
<dbReference type="InterPro" id="IPR006620">
    <property type="entry name" value="Pro_4_hyd_alph"/>
</dbReference>
<dbReference type="InterPro" id="IPR044862">
    <property type="entry name" value="Pro_4_hyd_alph_FE2OG_OXY"/>
</dbReference>
<dbReference type="NCBIfam" id="NF003974">
    <property type="entry name" value="PRK05467.1-3"/>
    <property type="match status" value="1"/>
</dbReference>
<dbReference type="NCBIfam" id="NF003975">
    <property type="entry name" value="PRK05467.1-4"/>
    <property type="match status" value="1"/>
</dbReference>
<dbReference type="PANTHER" id="PTHR41536">
    <property type="entry name" value="PKHD-TYPE HYDROXYLASE YBIX"/>
    <property type="match status" value="1"/>
</dbReference>
<dbReference type="PANTHER" id="PTHR41536:SF1">
    <property type="entry name" value="PKHD-TYPE HYDROXYLASE YBIX"/>
    <property type="match status" value="1"/>
</dbReference>
<dbReference type="Pfam" id="PF13640">
    <property type="entry name" value="2OG-FeII_Oxy_3"/>
    <property type="match status" value="1"/>
</dbReference>
<dbReference type="Pfam" id="PF18331">
    <property type="entry name" value="PKHD_C"/>
    <property type="match status" value="1"/>
</dbReference>
<dbReference type="SMART" id="SM00702">
    <property type="entry name" value="P4Hc"/>
    <property type="match status" value="1"/>
</dbReference>
<dbReference type="SUPFAM" id="SSF51197">
    <property type="entry name" value="Clavaminate synthase-like"/>
    <property type="match status" value="1"/>
</dbReference>
<dbReference type="PROSITE" id="PS51471">
    <property type="entry name" value="FE2OG_OXY"/>
    <property type="match status" value="1"/>
</dbReference>
<name>Y724_ALIB4</name>
<organism>
    <name type="scientific">Aliarcobacter butzleri (strain RM4018)</name>
    <name type="common">Arcobacter butzleri</name>
    <dbReference type="NCBI Taxonomy" id="367737"/>
    <lineage>
        <taxon>Bacteria</taxon>
        <taxon>Pseudomonadati</taxon>
        <taxon>Campylobacterota</taxon>
        <taxon>Epsilonproteobacteria</taxon>
        <taxon>Campylobacterales</taxon>
        <taxon>Arcobacteraceae</taxon>
        <taxon>Aliarcobacter</taxon>
    </lineage>
</organism>
<evidence type="ECO:0000255" key="1">
    <source>
        <dbReference type="HAMAP-Rule" id="MF_00657"/>
    </source>
</evidence>
<comment type="cofactor">
    <cofactor evidence="1">
        <name>Fe(2+)</name>
        <dbReference type="ChEBI" id="CHEBI:29033"/>
    </cofactor>
    <text evidence="1">Binds 1 Fe(2+) ion per subunit.</text>
</comment>
<comment type="cofactor">
    <cofactor evidence="1">
        <name>L-ascorbate</name>
        <dbReference type="ChEBI" id="CHEBI:38290"/>
    </cofactor>
</comment>
<accession>A8ESR5</accession>
<protein>
    <recommendedName>
        <fullName evidence="1">PKHD-type hydroxylase Abu_0724</fullName>
        <ecNumber evidence="1">1.14.11.-</ecNumber>
    </recommendedName>
</protein>
<feature type="chain" id="PRO_1000061707" description="PKHD-type hydroxylase Abu_0724">
    <location>
        <begin position="1"/>
        <end position="226"/>
    </location>
</feature>
<feature type="domain" description="Fe2OG dioxygenase" evidence="1">
    <location>
        <begin position="78"/>
        <end position="178"/>
    </location>
</feature>
<feature type="binding site" evidence="1">
    <location>
        <position position="96"/>
    </location>
    <ligand>
        <name>Fe cation</name>
        <dbReference type="ChEBI" id="CHEBI:24875"/>
    </ligand>
</feature>
<feature type="binding site" evidence="1">
    <location>
        <position position="98"/>
    </location>
    <ligand>
        <name>Fe cation</name>
        <dbReference type="ChEBI" id="CHEBI:24875"/>
    </ligand>
</feature>
<feature type="binding site" evidence="1">
    <location>
        <position position="159"/>
    </location>
    <ligand>
        <name>Fe cation</name>
        <dbReference type="ChEBI" id="CHEBI:24875"/>
    </ligand>
</feature>
<feature type="binding site" evidence="1">
    <location>
        <position position="169"/>
    </location>
    <ligand>
        <name>2-oxoglutarate</name>
        <dbReference type="ChEBI" id="CHEBI:16810"/>
    </ligand>
</feature>
<keyword id="KW-0223">Dioxygenase</keyword>
<keyword id="KW-0408">Iron</keyword>
<keyword id="KW-0479">Metal-binding</keyword>
<keyword id="KW-0560">Oxidoreductase</keyword>
<keyword id="KW-1185">Reference proteome</keyword>
<keyword id="KW-0847">Vitamin C</keyword>